<evidence type="ECO:0000250" key="1"/>
<evidence type="ECO:0000305" key="2"/>
<organism>
    <name type="scientific">Pyrococcus furiosus (strain ATCC 43587 / DSM 3638 / JCM 8422 / Vc1)</name>
    <dbReference type="NCBI Taxonomy" id="186497"/>
    <lineage>
        <taxon>Archaea</taxon>
        <taxon>Methanobacteriati</taxon>
        <taxon>Methanobacteriota</taxon>
        <taxon>Thermococci</taxon>
        <taxon>Thermococcales</taxon>
        <taxon>Thermococcaceae</taxon>
        <taxon>Pyrococcus</taxon>
    </lineage>
</organism>
<accession>Q8U2A0</accession>
<sequence>MKARGRAWKYGDNIDTDVIIPARYLNTSDPKELAQHVLEDLDPEFRYKMKPGDIIVAGENFGCGSSREHAPLAIKAAGVSAVIAKSFARIFYRNAINIGLPILEAPEAVERIETGDEIEIDFSTGEIRNLTKGEVYHANPFPEFIMEIIKAGGLVEWAKRRLAK</sequence>
<proteinExistence type="inferred from homology"/>
<name>LEUD1_PYRFU</name>
<comment type="function">
    <text evidence="1">Catalyzes the isomerization between 2-isopropylmalate and 3-isopropylmalate, via the formation of 2-isopropylmaleate.</text>
</comment>
<comment type="catalytic activity">
    <reaction>
        <text>(2R,3S)-3-isopropylmalate = (2S)-2-isopropylmalate</text>
        <dbReference type="Rhea" id="RHEA:32287"/>
        <dbReference type="ChEBI" id="CHEBI:1178"/>
        <dbReference type="ChEBI" id="CHEBI:35121"/>
        <dbReference type="EC" id="4.2.1.33"/>
    </reaction>
</comment>
<comment type="pathway">
    <text>Amino-acid biosynthesis; L-leucine biosynthesis; L-leucine from 3-methyl-2-oxobutanoate: step 2/4.</text>
</comment>
<comment type="subunit">
    <text evidence="1">Heterodimer of LeuC and LeuD.</text>
</comment>
<comment type="similarity">
    <text evidence="2">Belongs to the LeuD family. LeuD type 2 subfamily.</text>
</comment>
<protein>
    <recommendedName>
        <fullName>3-isopropylmalate dehydratase small subunit 1</fullName>
        <ecNumber>4.2.1.33</ecNumber>
    </recommendedName>
    <alternativeName>
        <fullName>Alpha-IPM isomerase 1</fullName>
        <shortName>IPMI 1</shortName>
    </alternativeName>
    <alternativeName>
        <fullName>Isopropylmalate isomerase 1</fullName>
    </alternativeName>
</protein>
<feature type="chain" id="PRO_0000141947" description="3-isopropylmalate dehydratase small subunit 1">
    <location>
        <begin position="1"/>
        <end position="164"/>
    </location>
</feature>
<gene>
    <name type="primary">leuD1</name>
    <name type="ordered locus">PF0939</name>
</gene>
<dbReference type="EC" id="4.2.1.33"/>
<dbReference type="EMBL" id="AE009950">
    <property type="protein sequence ID" value="AAL81063.1"/>
    <property type="molecule type" value="Genomic_DNA"/>
</dbReference>
<dbReference type="SMR" id="Q8U2A0"/>
<dbReference type="STRING" id="186497.PF0939"/>
<dbReference type="PaxDb" id="186497-PF0939"/>
<dbReference type="KEGG" id="pfu:PF0939"/>
<dbReference type="PATRIC" id="fig|186497.12.peg.995"/>
<dbReference type="eggNOG" id="arCOG02230">
    <property type="taxonomic scope" value="Archaea"/>
</dbReference>
<dbReference type="HOGENOM" id="CLU_081378_1_1_2"/>
<dbReference type="OrthoDB" id="6505at2157"/>
<dbReference type="PhylomeDB" id="Q8U2A0"/>
<dbReference type="UniPathway" id="UPA00048">
    <property type="reaction ID" value="UER00071"/>
</dbReference>
<dbReference type="Proteomes" id="UP000001013">
    <property type="component" value="Chromosome"/>
</dbReference>
<dbReference type="GO" id="GO:0003861">
    <property type="term" value="F:3-isopropylmalate dehydratase activity"/>
    <property type="evidence" value="ECO:0007669"/>
    <property type="project" value="UniProtKB-UniRule"/>
</dbReference>
<dbReference type="GO" id="GO:0009098">
    <property type="term" value="P:L-leucine biosynthetic process"/>
    <property type="evidence" value="ECO:0007669"/>
    <property type="project" value="UniProtKB-UniRule"/>
</dbReference>
<dbReference type="CDD" id="cd01577">
    <property type="entry name" value="IPMI_Swivel"/>
    <property type="match status" value="1"/>
</dbReference>
<dbReference type="FunFam" id="3.20.19.10:FF:000007">
    <property type="entry name" value="Isopropylmalate/citramalate isomerase small subunit"/>
    <property type="match status" value="1"/>
</dbReference>
<dbReference type="Gene3D" id="3.20.19.10">
    <property type="entry name" value="Aconitase, domain 4"/>
    <property type="match status" value="1"/>
</dbReference>
<dbReference type="HAMAP" id="MF_01032">
    <property type="entry name" value="LeuD_type2"/>
    <property type="match status" value="1"/>
</dbReference>
<dbReference type="InterPro" id="IPR015928">
    <property type="entry name" value="Aconitase/3IPM_dehydase_swvl"/>
</dbReference>
<dbReference type="InterPro" id="IPR000573">
    <property type="entry name" value="AconitaseA/IPMdHydase_ssu_swvl"/>
</dbReference>
<dbReference type="InterPro" id="IPR033940">
    <property type="entry name" value="IPMI_Swivel"/>
</dbReference>
<dbReference type="InterPro" id="IPR050075">
    <property type="entry name" value="LeuD"/>
</dbReference>
<dbReference type="InterPro" id="IPR011824">
    <property type="entry name" value="LeuD/DmdB_bac"/>
</dbReference>
<dbReference type="InterPro" id="IPR011827">
    <property type="entry name" value="LeuD_type2/HacB/DmdB"/>
</dbReference>
<dbReference type="NCBIfam" id="TIGR02084">
    <property type="entry name" value="leud"/>
    <property type="match status" value="1"/>
</dbReference>
<dbReference type="NCBIfam" id="TIGR02087">
    <property type="entry name" value="LEUD_arch"/>
    <property type="match status" value="1"/>
</dbReference>
<dbReference type="PANTHER" id="PTHR43345:SF2">
    <property type="entry name" value="3-ISOPROPYLMALATE DEHYDRATASE SMALL SUBUNIT 1"/>
    <property type="match status" value="1"/>
</dbReference>
<dbReference type="PANTHER" id="PTHR43345">
    <property type="entry name" value="3-ISOPROPYLMALATE DEHYDRATASE SMALL SUBUNIT 2-RELATED-RELATED"/>
    <property type="match status" value="1"/>
</dbReference>
<dbReference type="Pfam" id="PF00694">
    <property type="entry name" value="Aconitase_C"/>
    <property type="match status" value="1"/>
</dbReference>
<dbReference type="SUPFAM" id="SSF52016">
    <property type="entry name" value="LeuD/IlvD-like"/>
    <property type="match status" value="1"/>
</dbReference>
<reference key="1">
    <citation type="journal article" date="1999" name="Genetics">
        <title>Divergence of the hyperthermophilic archaea Pyrococcus furiosus and P. horikoshii inferred from complete genomic sequences.</title>
        <authorList>
            <person name="Maeder D.L."/>
            <person name="Weiss R.B."/>
            <person name="Dunn D.M."/>
            <person name="Cherry J.L."/>
            <person name="Gonzalez J.M."/>
            <person name="DiRuggiero J."/>
            <person name="Robb F.T."/>
        </authorList>
    </citation>
    <scope>NUCLEOTIDE SEQUENCE [LARGE SCALE GENOMIC DNA]</scope>
    <source>
        <strain>ATCC 43587 / DSM 3638 / JCM 8422 / Vc1</strain>
    </source>
</reference>
<keyword id="KW-0028">Amino-acid biosynthesis</keyword>
<keyword id="KW-0100">Branched-chain amino acid biosynthesis</keyword>
<keyword id="KW-0432">Leucine biosynthesis</keyword>
<keyword id="KW-0456">Lyase</keyword>
<keyword id="KW-1185">Reference proteome</keyword>